<dbReference type="EMBL" id="AY072695">
    <property type="protein sequence ID" value="AAL65291.1"/>
    <property type="molecule type" value="mRNA"/>
</dbReference>
<dbReference type="PDB" id="2DDA">
    <property type="method" value="X-ray"/>
    <property type="resolution" value="2.25 A"/>
    <property type="chains" value="A/B/C/D=28-238"/>
</dbReference>
<dbReference type="PDBsum" id="2DDA"/>
<dbReference type="SMR" id="Q8AVA4"/>
<dbReference type="EvolutionaryTrace" id="Q8AVA4"/>
<dbReference type="GO" id="GO:0005576">
    <property type="term" value="C:extracellular region"/>
    <property type="evidence" value="ECO:0007669"/>
    <property type="project" value="UniProtKB-SubCell"/>
</dbReference>
<dbReference type="GO" id="GO:0099106">
    <property type="term" value="F:ion channel regulator activity"/>
    <property type="evidence" value="ECO:0007669"/>
    <property type="project" value="UniProtKB-KW"/>
</dbReference>
<dbReference type="GO" id="GO:0046872">
    <property type="term" value="F:metal ion binding"/>
    <property type="evidence" value="ECO:0007669"/>
    <property type="project" value="UniProtKB-KW"/>
</dbReference>
<dbReference type="GO" id="GO:0090729">
    <property type="term" value="F:toxin activity"/>
    <property type="evidence" value="ECO:0007669"/>
    <property type="project" value="UniProtKB-KW"/>
</dbReference>
<dbReference type="CDD" id="cd05383">
    <property type="entry name" value="CAP_CRISP"/>
    <property type="match status" value="1"/>
</dbReference>
<dbReference type="FunFam" id="1.10.10.740:FF:000001">
    <property type="entry name" value="Cysteine-rich secretory protein 2"/>
    <property type="match status" value="1"/>
</dbReference>
<dbReference type="FunFam" id="3.40.33.10:FF:000005">
    <property type="entry name" value="Cysteine-rich secretory protein 2"/>
    <property type="match status" value="1"/>
</dbReference>
<dbReference type="Gene3D" id="3.40.33.10">
    <property type="entry name" value="CAP"/>
    <property type="match status" value="1"/>
</dbReference>
<dbReference type="Gene3D" id="1.10.10.740">
    <property type="entry name" value="Crisp domain"/>
    <property type="match status" value="1"/>
</dbReference>
<dbReference type="InterPro" id="IPR018244">
    <property type="entry name" value="Allrgn_V5/Tpx1_CS"/>
</dbReference>
<dbReference type="InterPro" id="IPR014044">
    <property type="entry name" value="CAP_dom"/>
</dbReference>
<dbReference type="InterPro" id="IPR035940">
    <property type="entry name" value="CAP_sf"/>
</dbReference>
<dbReference type="InterPro" id="IPR042076">
    <property type="entry name" value="Crisp-like_dom"/>
</dbReference>
<dbReference type="InterPro" id="IPR001283">
    <property type="entry name" value="CRISP-related"/>
</dbReference>
<dbReference type="InterPro" id="IPR013871">
    <property type="entry name" value="Cysteine_rich_secretory"/>
</dbReference>
<dbReference type="InterPro" id="IPR034117">
    <property type="entry name" value="SCP_CRISP"/>
</dbReference>
<dbReference type="InterPro" id="IPR003582">
    <property type="entry name" value="ShKT_dom"/>
</dbReference>
<dbReference type="PANTHER" id="PTHR10334">
    <property type="entry name" value="CYSTEINE-RICH SECRETORY PROTEIN-RELATED"/>
    <property type="match status" value="1"/>
</dbReference>
<dbReference type="Pfam" id="PF00188">
    <property type="entry name" value="CAP"/>
    <property type="match status" value="1"/>
</dbReference>
<dbReference type="Pfam" id="PF08562">
    <property type="entry name" value="Crisp"/>
    <property type="match status" value="1"/>
</dbReference>
<dbReference type="PRINTS" id="PR00837">
    <property type="entry name" value="V5TPXLIKE"/>
</dbReference>
<dbReference type="SMART" id="SM00198">
    <property type="entry name" value="SCP"/>
    <property type="match status" value="1"/>
</dbReference>
<dbReference type="SUPFAM" id="SSF57546">
    <property type="entry name" value="Crisp domain-like"/>
    <property type="match status" value="1"/>
</dbReference>
<dbReference type="SUPFAM" id="SSF55797">
    <property type="entry name" value="PR-1-like"/>
    <property type="match status" value="1"/>
</dbReference>
<dbReference type="PROSITE" id="PS01009">
    <property type="entry name" value="CRISP_1"/>
    <property type="match status" value="1"/>
</dbReference>
<dbReference type="PROSITE" id="PS01010">
    <property type="entry name" value="CRISP_2"/>
    <property type="match status" value="1"/>
</dbReference>
<dbReference type="PROSITE" id="PS51670">
    <property type="entry name" value="SHKT"/>
    <property type="match status" value="1"/>
</dbReference>
<comment type="function">
    <text evidence="3 4 6">Blocks olfactory (CNGA2) and retinal (CNGA1) cyclic nucleotide-gated (CNG) ion channel currents. Does not inhibit retinal (CNGA3) currents. It forms high-affinity contacts with the pore turret region and most likely inhibits CNG channel current by blocking the external entrance to the transmembrane pore. Is really more potent that Pseudecin. Does not affect neither depolarization- nor caffeine-induced contraction arterial smooth muscle.</text>
</comment>
<comment type="subcellular location">
    <subcellularLocation>
        <location>Secreted</location>
    </subcellularLocation>
</comment>
<comment type="tissue specificity">
    <text>Expressed by the venom gland.</text>
</comment>
<comment type="mass spectrometry"/>
<comment type="similarity">
    <text evidence="7">Belongs to the CRISP family.</text>
</comment>
<protein>
    <recommendedName>
        <fullName>Cysteine-rich venom protein pseudechetoxin</fullName>
        <shortName>CRVP PsTx</shortName>
    </recommendedName>
</protein>
<feature type="signal peptide" evidence="1">
    <location>
        <begin position="1"/>
        <end position="19"/>
    </location>
</feature>
<feature type="propeptide" id="PRO_0000006282" evidence="3 6">
    <location>
        <begin position="20"/>
        <end position="27"/>
    </location>
</feature>
<feature type="chain" id="PRO_0000006283" description="Cysteine-rich venom protein pseudechetoxin">
    <location>
        <begin position="28"/>
        <end position="238"/>
    </location>
</feature>
<feature type="domain" description="SCP">
    <location>
        <begin position="38"/>
        <end position="164"/>
    </location>
</feature>
<feature type="domain" description="ShKT" evidence="2">
    <location>
        <begin position="200"/>
        <end position="233"/>
    </location>
</feature>
<feature type="binding site" evidence="1">
    <location>
        <position position="51"/>
    </location>
    <ligand>
        <name>Zn(2+)</name>
        <dbReference type="ChEBI" id="CHEBI:29105"/>
    </ligand>
</feature>
<feature type="binding site" evidence="1">
    <location>
        <position position="106"/>
    </location>
    <ligand>
        <name>Zn(2+)</name>
        <dbReference type="ChEBI" id="CHEBI:29105"/>
    </ligand>
</feature>
<feature type="disulfide bond" evidence="2 5">
    <location>
        <begin position="75"/>
        <end position="153"/>
    </location>
</feature>
<feature type="disulfide bond" evidence="2 5">
    <location>
        <begin position="92"/>
        <end position="165"/>
    </location>
</feature>
<feature type="disulfide bond" evidence="2 5">
    <location>
        <begin position="148"/>
        <end position="162"/>
    </location>
</feature>
<feature type="disulfide bond" evidence="2 5">
    <location>
        <begin position="184"/>
        <end position="191"/>
    </location>
</feature>
<feature type="disulfide bond" evidence="2 5">
    <location>
        <begin position="187"/>
        <end position="196"/>
    </location>
</feature>
<feature type="disulfide bond" evidence="2 5">
    <location>
        <begin position="200"/>
        <end position="233"/>
    </location>
</feature>
<feature type="disulfide bond" evidence="2 5">
    <location>
        <begin position="209"/>
        <end position="227"/>
    </location>
</feature>
<feature type="disulfide bond" evidence="2 5">
    <location>
        <begin position="218"/>
        <end position="231"/>
    </location>
</feature>
<feature type="helix" evidence="8">
    <location>
        <begin position="33"/>
        <end position="46"/>
    </location>
</feature>
<feature type="strand" evidence="8">
    <location>
        <begin position="52"/>
        <end position="54"/>
    </location>
</feature>
<feature type="helix" evidence="8">
    <location>
        <begin position="62"/>
        <end position="72"/>
    </location>
</feature>
<feature type="helix" evidence="8">
    <location>
        <begin position="82"/>
        <end position="84"/>
    </location>
</feature>
<feature type="strand" evidence="8">
    <location>
        <begin position="85"/>
        <end position="87"/>
    </location>
</feature>
<feature type="strand" evidence="8">
    <location>
        <begin position="93"/>
        <end position="101"/>
    </location>
</feature>
<feature type="helix" evidence="8">
    <location>
        <begin position="105"/>
        <end position="113"/>
    </location>
</feature>
<feature type="helix" evidence="8">
    <location>
        <begin position="114"/>
        <end position="118"/>
    </location>
</feature>
<feature type="turn" evidence="8">
    <location>
        <begin position="121"/>
        <end position="123"/>
    </location>
</feature>
<feature type="strand" evidence="8">
    <location>
        <begin position="124"/>
        <end position="127"/>
    </location>
</feature>
<feature type="helix" evidence="8">
    <location>
        <begin position="133"/>
        <end position="138"/>
    </location>
</feature>
<feature type="strand" evidence="8">
    <location>
        <begin position="145"/>
        <end position="154"/>
    </location>
</feature>
<feature type="strand" evidence="8">
    <location>
        <begin position="157"/>
        <end position="166"/>
    </location>
</feature>
<feature type="turn" evidence="8">
    <location>
        <begin position="171"/>
        <end position="174"/>
    </location>
</feature>
<feature type="strand" evidence="8">
    <location>
        <begin position="180"/>
        <end position="182"/>
    </location>
</feature>
<feature type="turn" evidence="8">
    <location>
        <begin position="183"/>
        <end position="186"/>
    </location>
</feature>
<feature type="strand" evidence="8">
    <location>
        <begin position="190"/>
        <end position="192"/>
    </location>
</feature>
<feature type="helix" evidence="8">
    <location>
        <begin position="209"/>
        <end position="216"/>
    </location>
</feature>
<feature type="helix" evidence="8">
    <location>
        <begin position="221"/>
        <end position="226"/>
    </location>
</feature>
<feature type="helix" evidence="8">
    <location>
        <begin position="228"/>
        <end position="232"/>
    </location>
</feature>
<feature type="strand" evidence="8">
    <location>
        <begin position="234"/>
        <end position="237"/>
    </location>
</feature>
<proteinExistence type="evidence at protein level"/>
<reference key="1">
    <citation type="journal article" date="2002" name="Biochemistry">
        <title>Purification and cloning of toxins from elapid venoms that target cyclic nucleotide-gated ion channels.</title>
        <authorList>
            <person name="Yamazaki Y."/>
            <person name="Brown R.L."/>
            <person name="Morita T."/>
        </authorList>
    </citation>
    <scope>NUCLEOTIDE SEQUENCE [MRNA]</scope>
    <scope>PROTEIN SEQUENCE OF 28-35</scope>
    <scope>FUNCTION</scope>
    <scope>MASS SPECTROMETRY</scope>
    <source>
        <tissue>Venom</tissue>
        <tissue>Venom gland</tissue>
    </source>
</reference>
<reference key="2">
    <citation type="journal article" date="1999" name="Proc. Natl. Acad. Sci. U.S.A.">
        <title>Pseudechetoxin: a peptide blocker of cyclic nucleotide-gated ion channels.</title>
        <authorList>
            <person name="Brown R.L."/>
            <person name="Haley T.L."/>
            <person name="West K.A."/>
            <person name="Crabb J.W."/>
        </authorList>
    </citation>
    <scope>PROTEIN SEQUENCE OF 28-35 AND 39-57</scope>
    <scope>FUNCTION</scope>
    <scope>CHARACTERIZATION</scope>
    <source>
        <tissue>Venom</tissue>
    </source>
</reference>
<reference key="3">
    <citation type="journal article" date="2003" name="J. Gen. Physiol.">
        <title>Pseudechetoxin binds to the pore turret of cyclic nucleotide-gated ion channels.</title>
        <authorList>
            <person name="Brown R.L."/>
            <person name="Lynch L.L."/>
            <person name="Haley T.L."/>
            <person name="Arsanjani R."/>
        </authorList>
    </citation>
    <scope>FUNCTION</scope>
</reference>
<reference key="4">
    <citation type="journal article" date="2005" name="Acta Crystallogr. F">
        <title>Crystallization and preliminary X-ray diffraction analyses of pseudechetoxin and pseudecin, two snake-venom cysteine-rich secretory proteins that target cyclic nucleotide-gated ion channels.</title>
        <authorList>
            <person name="Suzuki N."/>
            <person name="Yamazaki Y."/>
            <person name="Fujimoto Z."/>
            <person name="Morita T."/>
            <person name="Mizuno H."/>
        </authorList>
    </citation>
    <scope>CRYSTALLIZATION</scope>
</reference>
<reference key="5">
    <citation type="journal article" date="2008" name="Acta Crystallogr. D">
        <title>Structures of pseudechetoxin and pseudecin, two snake-venom cysteine-rich secretory proteins that target cyclic nucleotide-gated ion channels: implications for movement of the C-terminal cysteine-rich domain.</title>
        <authorList>
            <person name="Suzuki N."/>
            <person name="Yamazaki Y."/>
            <person name="Brown R.L."/>
            <person name="Fujimoto Z."/>
            <person name="Morita T."/>
            <person name="Mizuno H."/>
        </authorList>
    </citation>
    <scope>X-RAY CRYSTALLOGRAPHY (2.25 ANGSTROMS) OF 28-238</scope>
    <scope>DISULFIDE BONDS</scope>
</reference>
<organism>
    <name type="scientific">Pseudechis australis</name>
    <name type="common">Mulga snake</name>
    <name type="synonym">King brown snake</name>
    <dbReference type="NCBI Taxonomy" id="8670"/>
    <lineage>
        <taxon>Eukaryota</taxon>
        <taxon>Metazoa</taxon>
        <taxon>Chordata</taxon>
        <taxon>Craniata</taxon>
        <taxon>Vertebrata</taxon>
        <taxon>Euteleostomi</taxon>
        <taxon>Lepidosauria</taxon>
        <taxon>Squamata</taxon>
        <taxon>Bifurcata</taxon>
        <taxon>Unidentata</taxon>
        <taxon>Episquamata</taxon>
        <taxon>Toxicofera</taxon>
        <taxon>Serpentes</taxon>
        <taxon>Colubroidea</taxon>
        <taxon>Elapidae</taxon>
        <taxon>Hydrophiinae</taxon>
        <taxon>Pseudechis</taxon>
    </lineage>
</organism>
<name>CRVP_PSEAU</name>
<evidence type="ECO:0000250" key="1"/>
<evidence type="ECO:0000255" key="2">
    <source>
        <dbReference type="PROSITE-ProRule" id="PRU01005"/>
    </source>
</evidence>
<evidence type="ECO:0000269" key="3">
    <source>
    </source>
</evidence>
<evidence type="ECO:0000269" key="4">
    <source>
    </source>
</evidence>
<evidence type="ECO:0000269" key="5">
    <source>
    </source>
</evidence>
<evidence type="ECO:0000269" key="6">
    <source>
    </source>
</evidence>
<evidence type="ECO:0000305" key="7"/>
<evidence type="ECO:0007829" key="8">
    <source>
        <dbReference type="PDB" id="2DDA"/>
    </source>
</evidence>
<sequence>MIAFIVLLSLAAVLQQSSGTADFASESSNKKNYQKEIVDKHNALRRSVKPTARNMLQMKWNSRAAQNAKRWANRCTFAHSPPNKRTVGKLRCGENIFMSSQPFPWSGVVQAWYDEIKNFVYGIGAKPPGSVIGHYTQVVWYKSYLIGCASAKCSSSKYLYVCQYCPAGNIRGSIATPYKSGPPCADCPSACVNKLCTNPCKRNNDFSNCKSLAKKSKCQTEWIKKKCPASCFCHNKII</sequence>
<keyword id="KW-0002">3D-structure</keyword>
<keyword id="KW-0903">Direct protein sequencing</keyword>
<keyword id="KW-1015">Disulfide bond</keyword>
<keyword id="KW-0872">Ion channel impairing toxin</keyword>
<keyword id="KW-0479">Metal-binding</keyword>
<keyword id="KW-0528">Neurotoxin</keyword>
<keyword id="KW-0964">Secreted</keyword>
<keyword id="KW-0732">Signal</keyword>
<keyword id="KW-0800">Toxin</keyword>
<keyword id="KW-0862">Zinc</keyword>
<accession>Q8AVA4</accession>